<organism>
    <name type="scientific">Bartonella henselae (strain ATCC 49882 / DSM 28221 / CCUG 30454 / Houston 1)</name>
    <name type="common">Rochalimaea henselae</name>
    <dbReference type="NCBI Taxonomy" id="283166"/>
    <lineage>
        <taxon>Bacteria</taxon>
        <taxon>Pseudomonadati</taxon>
        <taxon>Pseudomonadota</taxon>
        <taxon>Alphaproteobacteria</taxon>
        <taxon>Hyphomicrobiales</taxon>
        <taxon>Bartonellaceae</taxon>
        <taxon>Bartonella</taxon>
    </lineage>
</organism>
<evidence type="ECO:0000255" key="1">
    <source>
        <dbReference type="HAMAP-Rule" id="MF_01899"/>
    </source>
</evidence>
<protein>
    <recommendedName>
        <fullName evidence="1">Ribonuclease D</fullName>
        <shortName evidence="1">RNase D</shortName>
        <ecNumber evidence="1">3.1.13.5</ecNumber>
    </recommendedName>
</protein>
<accession>Q6G329</accession>
<proteinExistence type="inferred from homology"/>
<reference key="1">
    <citation type="journal article" date="2004" name="Proc. Natl. Acad. Sci. U.S.A.">
        <title>The louse-borne human pathogen Bartonella quintana is a genomic derivative of the zoonotic agent Bartonella henselae.</title>
        <authorList>
            <person name="Alsmark U.C.M."/>
            <person name="Frank A.C."/>
            <person name="Karlberg E.O."/>
            <person name="Legault B.-A."/>
            <person name="Ardell D.H."/>
            <person name="Canbaeck B."/>
            <person name="Eriksson A.-S."/>
            <person name="Naeslund A.K."/>
            <person name="Handley S.A."/>
            <person name="Huvet M."/>
            <person name="La Scola B."/>
            <person name="Holmberg M."/>
            <person name="Andersson S.G.E."/>
        </authorList>
    </citation>
    <scope>NUCLEOTIDE SEQUENCE [LARGE SCALE GENOMIC DNA]</scope>
    <source>
        <strain>ATCC 49882 / DSM 28221 / CCUG 30454 / Houston 1</strain>
    </source>
</reference>
<name>RND_BARHE</name>
<gene>
    <name evidence="1" type="primary">rnd</name>
    <name type="ordered locus">BH09800</name>
</gene>
<comment type="function">
    <text evidence="1">Exonuclease involved in the 3' processing of various precursor tRNAs. Initiates hydrolysis at the 3'-terminus of an RNA molecule and releases 5'-mononucleotides.</text>
</comment>
<comment type="catalytic activity">
    <reaction evidence="1">
        <text>Exonucleolytic cleavage that removes extra residues from the 3'-terminus of tRNA to produce 5'-mononucleotides.</text>
        <dbReference type="EC" id="3.1.13.5"/>
    </reaction>
</comment>
<comment type="cofactor">
    <cofactor evidence="1">
        <name>a divalent metal cation</name>
        <dbReference type="ChEBI" id="CHEBI:60240"/>
    </cofactor>
</comment>
<comment type="subcellular location">
    <subcellularLocation>
        <location evidence="1">Cytoplasm</location>
    </subcellularLocation>
</comment>
<comment type="similarity">
    <text evidence="1">Belongs to the RNase D family.</text>
</comment>
<sequence>MRTKTQKKSQEKTNLNLSGYNRMMKLITQTTDLEIALATLRNSDFVTIDTEFIRETTFWPQLCLIQLASPDTTVLIDPISQDIDLKPFFDLMVNKKIVKVFHAARQDIETIYHLGGVIPSPLFDTQIAGSICGFGDSISYDQIVQRCTGYQLDKSSRFTDWSFRPLSEKQLLYALADVTYLRDVYLLLKKQLEKNKRTHWMDDEIAVLLEPKTYDMPENEAWKKVKGKIKKPRELAVLQKIAAWRERKARQYNIPRRHIIKDECLIEIAIQQPKDEADLKRLRSLNKNWDKFSIAHTLIKAVHEGLEVDLATLPALPKHNPLNETSSAVIDLLKVLLKLVANENGIAPKIIATSNDLEKIANGCIKKNIPAMNGWRYEIFGQKAEQMLKGKIGFYLSNGKINTKQL</sequence>
<dbReference type="EC" id="3.1.13.5" evidence="1"/>
<dbReference type="EMBL" id="BX897699">
    <property type="protein sequence ID" value="CAF27773.1"/>
    <property type="molecule type" value="Genomic_DNA"/>
</dbReference>
<dbReference type="SMR" id="Q6G329"/>
<dbReference type="PaxDb" id="283166-BH09800"/>
<dbReference type="EnsemblBacteria" id="CAF27773">
    <property type="protein sequence ID" value="CAF27773"/>
    <property type="gene ID" value="BH09800"/>
</dbReference>
<dbReference type="KEGG" id="bhe:BH09800"/>
<dbReference type="eggNOG" id="COG0349">
    <property type="taxonomic scope" value="Bacteria"/>
</dbReference>
<dbReference type="Proteomes" id="UP000000421">
    <property type="component" value="Chromosome"/>
</dbReference>
<dbReference type="GO" id="GO:0005737">
    <property type="term" value="C:cytoplasm"/>
    <property type="evidence" value="ECO:0007669"/>
    <property type="project" value="UniProtKB-SubCell"/>
</dbReference>
<dbReference type="GO" id="GO:0008408">
    <property type="term" value="F:3'-5' exonuclease activity"/>
    <property type="evidence" value="ECO:0007669"/>
    <property type="project" value="InterPro"/>
</dbReference>
<dbReference type="GO" id="GO:0003676">
    <property type="term" value="F:nucleic acid binding"/>
    <property type="evidence" value="ECO:0007669"/>
    <property type="project" value="InterPro"/>
</dbReference>
<dbReference type="GO" id="GO:0000166">
    <property type="term" value="F:nucleotide binding"/>
    <property type="evidence" value="ECO:0007669"/>
    <property type="project" value="InterPro"/>
</dbReference>
<dbReference type="GO" id="GO:0033890">
    <property type="term" value="F:ribonuclease D activity"/>
    <property type="evidence" value="ECO:0007669"/>
    <property type="project" value="UniProtKB-UniRule"/>
</dbReference>
<dbReference type="GO" id="GO:0042780">
    <property type="term" value="P:tRNA 3'-end processing"/>
    <property type="evidence" value="ECO:0007669"/>
    <property type="project" value="UniProtKB-UniRule"/>
</dbReference>
<dbReference type="CDD" id="cd06142">
    <property type="entry name" value="RNaseD_exo"/>
    <property type="match status" value="1"/>
</dbReference>
<dbReference type="Gene3D" id="1.10.150.80">
    <property type="entry name" value="HRDC domain"/>
    <property type="match status" value="1"/>
</dbReference>
<dbReference type="Gene3D" id="3.30.420.10">
    <property type="entry name" value="Ribonuclease H-like superfamily/Ribonuclease H"/>
    <property type="match status" value="1"/>
</dbReference>
<dbReference type="HAMAP" id="MF_01899">
    <property type="entry name" value="RNase_D"/>
    <property type="match status" value="1"/>
</dbReference>
<dbReference type="InterPro" id="IPR002562">
    <property type="entry name" value="3'-5'_exonuclease_dom"/>
</dbReference>
<dbReference type="InterPro" id="IPR010997">
    <property type="entry name" value="HRDC-like_sf"/>
</dbReference>
<dbReference type="InterPro" id="IPR002121">
    <property type="entry name" value="HRDC_dom"/>
</dbReference>
<dbReference type="InterPro" id="IPR044876">
    <property type="entry name" value="HRDC_dom_sf"/>
</dbReference>
<dbReference type="InterPro" id="IPR006292">
    <property type="entry name" value="RNase_D"/>
</dbReference>
<dbReference type="InterPro" id="IPR051086">
    <property type="entry name" value="RNase_D-like"/>
</dbReference>
<dbReference type="InterPro" id="IPR012337">
    <property type="entry name" value="RNaseH-like_sf"/>
</dbReference>
<dbReference type="InterPro" id="IPR036397">
    <property type="entry name" value="RNaseH_sf"/>
</dbReference>
<dbReference type="NCBIfam" id="TIGR01388">
    <property type="entry name" value="rnd"/>
    <property type="match status" value="1"/>
</dbReference>
<dbReference type="PANTHER" id="PTHR47649">
    <property type="entry name" value="RIBONUCLEASE D"/>
    <property type="match status" value="1"/>
</dbReference>
<dbReference type="PANTHER" id="PTHR47649:SF1">
    <property type="entry name" value="RIBONUCLEASE D"/>
    <property type="match status" value="1"/>
</dbReference>
<dbReference type="Pfam" id="PF01612">
    <property type="entry name" value="DNA_pol_A_exo1"/>
    <property type="match status" value="1"/>
</dbReference>
<dbReference type="Pfam" id="PF00570">
    <property type="entry name" value="HRDC"/>
    <property type="match status" value="1"/>
</dbReference>
<dbReference type="SMART" id="SM00474">
    <property type="entry name" value="35EXOc"/>
    <property type="match status" value="1"/>
</dbReference>
<dbReference type="SMART" id="SM00341">
    <property type="entry name" value="HRDC"/>
    <property type="match status" value="1"/>
</dbReference>
<dbReference type="SUPFAM" id="SSF47819">
    <property type="entry name" value="HRDC-like"/>
    <property type="match status" value="2"/>
</dbReference>
<dbReference type="SUPFAM" id="SSF53098">
    <property type="entry name" value="Ribonuclease H-like"/>
    <property type="match status" value="1"/>
</dbReference>
<dbReference type="PROSITE" id="PS50967">
    <property type="entry name" value="HRDC"/>
    <property type="match status" value="1"/>
</dbReference>
<feature type="chain" id="PRO_0000411059" description="Ribonuclease D">
    <location>
        <begin position="1"/>
        <end position="406"/>
    </location>
</feature>
<feature type="domain" description="3'-5' exonuclease" evidence="1">
    <location>
        <begin position="26"/>
        <end position="193"/>
    </location>
</feature>
<feature type="domain" description="HRDC" evidence="1">
    <location>
        <begin position="231"/>
        <end position="312"/>
    </location>
</feature>
<keyword id="KW-0963">Cytoplasm</keyword>
<keyword id="KW-0269">Exonuclease</keyword>
<keyword id="KW-0378">Hydrolase</keyword>
<keyword id="KW-0540">Nuclease</keyword>
<keyword id="KW-0819">tRNA processing</keyword>